<organism>
    <name type="scientific">Oxyopes takobius</name>
    <name type="common">Lynx spider</name>
    <name type="synonym">Oxyopes foliiformis</name>
    <dbReference type="NCBI Taxonomy" id="666126"/>
    <lineage>
        <taxon>Eukaryota</taxon>
        <taxon>Metazoa</taxon>
        <taxon>Ecdysozoa</taxon>
        <taxon>Arthropoda</taxon>
        <taxon>Chelicerata</taxon>
        <taxon>Arachnida</taxon>
        <taxon>Araneae</taxon>
        <taxon>Araneomorphae</taxon>
        <taxon>Entelegynae</taxon>
        <taxon>Lycosoidea</taxon>
        <taxon>Oxyopidae</taxon>
        <taxon>Oxyopes</taxon>
    </lineage>
</organism>
<dbReference type="SMR" id="P83248"/>
<dbReference type="TCDB" id="1.C.68.1.1">
    <property type="family name" value="the channel-forming oxyopinin peptide (oxyopinin) family"/>
</dbReference>
<dbReference type="ArachnoServer" id="AS000186">
    <property type="toxin name" value="M-oxotoxin-Ot2a"/>
</dbReference>
<dbReference type="GO" id="GO:0005576">
    <property type="term" value="C:extracellular region"/>
    <property type="evidence" value="ECO:0007669"/>
    <property type="project" value="UniProtKB-SubCell"/>
</dbReference>
<dbReference type="GO" id="GO:0090729">
    <property type="term" value="F:toxin activity"/>
    <property type="evidence" value="ECO:0007669"/>
    <property type="project" value="UniProtKB-KW"/>
</dbReference>
<dbReference type="GO" id="GO:0042742">
    <property type="term" value="P:defense response to bacterium"/>
    <property type="evidence" value="ECO:0007669"/>
    <property type="project" value="UniProtKB-KW"/>
</dbReference>
<dbReference type="GO" id="GO:0019836">
    <property type="term" value="P:symbiont-mediated hemolysis of host erythrocyte"/>
    <property type="evidence" value="ECO:0007669"/>
    <property type="project" value="InterPro"/>
</dbReference>
<dbReference type="InterPro" id="IPR012522">
    <property type="entry name" value="Antimicrobial_3"/>
</dbReference>
<dbReference type="Pfam" id="PF08025">
    <property type="entry name" value="Antimicrobial_3"/>
    <property type="match status" value="1"/>
</dbReference>
<reference key="1">
    <citation type="journal article" date="2002" name="J. Biol. Chem.">
        <title>Oxyopinins, large amphipathic peptides isolated from the venom of the wolf spider Oxyopes kitabensis with cytolytic properties and positive insecticidal cooperativity with spider neurotoxins.</title>
        <authorList>
            <person name="Corzo G."/>
            <person name="Villegas E."/>
            <person name="Gomez-Lagunas F."/>
            <person name="Possani L.D."/>
            <person name="Belokoneva O.S."/>
            <person name="Nakajima T."/>
        </authorList>
    </citation>
    <scope>PROTEIN SEQUENCE</scope>
    <scope>FUNCTION</scope>
    <scope>TISSUE SPECIFICITY</scope>
    <scope>SUBCELLULAR LOCATION</scope>
    <scope>MASS SPECTROMETRY</scope>
    <scope>CIRCULAR DICHROISM ANALYSIS</scope>
    <source>
        <tissue>Venom</tissue>
    </source>
</reference>
<proteinExistence type="evidence at protein level"/>
<comment type="function">
    <text evidence="1">Disrupts biological membranes, particularly those rich in phosphocholine. Has antimicrobial activity against Gram-negative bacterium E.coli, Gram-positive bacteria B.subtilis and S.aureus, and hemolytic activity against sheep, pig and guinea pig red blood cells. Has insecticidal activity against S.frugiperda ovarian cells by opening non-selective ion channels. Enhances the insecticidal activity of spider venom neurotoxic peptides.</text>
</comment>
<comment type="subcellular location">
    <subcellularLocation>
        <location evidence="1">Secreted</location>
    </subcellularLocation>
</comment>
<comment type="tissue specificity">
    <text evidence="1">Expressed by the venom gland.</text>
</comment>
<comment type="mass spectrometry"/>
<comment type="similarity">
    <text evidence="2">Belongs to the cationic peptide 02 (oxyopinin-2) family.</text>
</comment>
<evidence type="ECO:0000269" key="1">
    <source>
    </source>
</evidence>
<evidence type="ECO:0000305" key="2"/>
<protein>
    <recommendedName>
        <fullName>M-oxotoxin-Ot2a</fullName>
        <shortName>M-OXTX-Ot2a</shortName>
    </recommendedName>
    <alternativeName>
        <fullName>Oxki2a</fullName>
    </alternativeName>
    <alternativeName>
        <fullName>Oxyopinin-2a</fullName>
    </alternativeName>
</protein>
<name>TOP2A_OXYTA</name>
<accession>P83248</accession>
<keyword id="KW-0044">Antibiotic</keyword>
<keyword id="KW-0929">Antimicrobial</keyword>
<keyword id="KW-0204">Cytolysis</keyword>
<keyword id="KW-0903">Direct protein sequencing</keyword>
<keyword id="KW-0354">Hemolysis</keyword>
<keyword id="KW-0964">Secreted</keyword>
<keyword id="KW-0800">Toxin</keyword>
<sequence>GKFSVFGKILRSIAKVFKGVGKVRKQFKTASDLDKNQ</sequence>
<feature type="peptide" id="PRO_0000045031" description="M-oxotoxin-Ot2a">
    <location>
        <begin position="1"/>
        <end position="37"/>
    </location>
</feature>